<proteinExistence type="evidence at protein level"/>
<evidence type="ECO:0000250" key="1">
    <source>
        <dbReference type="UniProtKB" id="Q39261"/>
    </source>
</evidence>
<evidence type="ECO:0000255" key="2">
    <source>
        <dbReference type="PROSITE-ProRule" id="PRU00042"/>
    </source>
</evidence>
<evidence type="ECO:0000256" key="3">
    <source>
        <dbReference type="SAM" id="MobiDB-lite"/>
    </source>
</evidence>
<evidence type="ECO:0000269" key="4">
    <source>
    </source>
</evidence>
<evidence type="ECO:0000303" key="5">
    <source>
    </source>
</evidence>
<evidence type="ECO:0000305" key="6"/>
<sequence length="235" mass="26351">MDASIVSSSTAFPYQDSLNQSIEDEERDVHNSSHELNLIDCIDDTTSIVNESTTSTEQKLFSCNYCQRTFYSSQALGGHQNAHKRERTLAKRGQRMAASASAFGHPYGFSPLPFHGQYNNHRSLGIQAHSISHKLSSYNGFGGHYGQINWSRLPFDQQPAIGKFPSMDNFHHHHHQMMMMAPSVNSRSNNIDSPSNTGRVLEGSPTLEQWHGDKGLLLSTSHHEEQQKLDLSLKL</sequence>
<comment type="function">
    <text evidence="4">Acts as a negative regulator of abscisic acid (ABA) signaling during germination and early seedling development. Involved in the regulation of vegetative development and fertility. Modulates red light signaling in seedling photomorphogenesis.</text>
</comment>
<comment type="interaction">
    <interactant intactId="EBI-15200178">
        <id>Q39262</id>
    </interactant>
    <interactant intactId="EBI-4425094">
        <id>O82239</id>
        <label>RFI2</label>
    </interactant>
    <organismsDiffer>false</organismsDiffer>
    <experiments>3</experiments>
</comment>
<comment type="interaction">
    <interactant intactId="EBI-15200178">
        <id>Q39262</id>
    </interactant>
    <interactant intactId="EBI-1113627">
        <id>O22152</id>
        <label>YAB1</label>
    </interactant>
    <organismsDiffer>false</organismsDiffer>
    <experiments>3</experiments>
</comment>
<comment type="subcellular location">
    <subcellularLocation>
        <location evidence="1">Nucleus</location>
    </subcellularLocation>
</comment>
<comment type="tissue specificity">
    <text>Expressed in the chalaze of seeds, hypocotyls, cotyledons, roots, emerging lateral roots, leaves, sepals and stamens. These data suggest that ZFP3 is expressed in most organs, showing high expression in vascular tissues.</text>
</comment>
<comment type="induction">
    <text evidence="4">Down-regulated by abscisic acid (ABA).</text>
</comment>
<comment type="disruption phenotype">
    <text evidence="4">No visible phenotype under normal growth conditions, but mutant seeds are hypersensitivite to inhibition of germination by abscisic acid (ABA).</text>
</comment>
<comment type="miscellaneous">
    <text evidence="4">Seeds over-expressing ZFP3 are insensitive to inhibition of germination by abscisic acid (ABA). Plants over-expressing ZFP3 are dwarf, have reduced number and size of siliques, which contains few seeds or are empty.</text>
</comment>
<name>ZFP3_ARATH</name>
<keyword id="KW-0938">Abscisic acid signaling pathway</keyword>
<keyword id="KW-0479">Metal-binding</keyword>
<keyword id="KW-0539">Nucleus</keyword>
<keyword id="KW-1185">Reference proteome</keyword>
<keyword id="KW-0862">Zinc</keyword>
<keyword id="KW-0863">Zinc-finger</keyword>
<protein>
    <recommendedName>
        <fullName evidence="6">Zinc finger protein 3</fullName>
    </recommendedName>
</protein>
<gene>
    <name evidence="5" type="primary">ZFP3</name>
    <name type="ordered locus">At5g25160</name>
    <name type="ORF">F21J6.6</name>
</gene>
<accession>Q39262</accession>
<dbReference type="EMBL" id="L39646">
    <property type="protein sequence ID" value="AAA87299.1"/>
    <property type="molecule type" value="mRNA"/>
</dbReference>
<dbReference type="EMBL" id="AC006259">
    <property type="protein sequence ID" value="AAC98442.1"/>
    <property type="molecule type" value="Genomic_DNA"/>
</dbReference>
<dbReference type="EMBL" id="CP002688">
    <property type="protein sequence ID" value="AED93407.1"/>
    <property type="molecule type" value="Genomic_DNA"/>
</dbReference>
<dbReference type="EMBL" id="BT008308">
    <property type="protein sequence ID" value="AAP37667.1"/>
    <property type="molecule type" value="mRNA"/>
</dbReference>
<dbReference type="PIR" id="S55883">
    <property type="entry name" value="S55883"/>
</dbReference>
<dbReference type="RefSeq" id="NP_197898.1">
    <property type="nucleotide sequence ID" value="NM_122425.3"/>
</dbReference>
<dbReference type="BioGRID" id="17862">
    <property type="interactions" value="40"/>
</dbReference>
<dbReference type="FunCoup" id="Q39262">
    <property type="interactions" value="103"/>
</dbReference>
<dbReference type="IntAct" id="Q39262">
    <property type="interactions" value="39"/>
</dbReference>
<dbReference type="STRING" id="3702.Q39262"/>
<dbReference type="PaxDb" id="3702-AT5G25160.1"/>
<dbReference type="ProteomicsDB" id="242923"/>
<dbReference type="EnsemblPlants" id="AT5G25160.1">
    <property type="protein sequence ID" value="AT5G25160.1"/>
    <property type="gene ID" value="AT5G25160"/>
</dbReference>
<dbReference type="GeneID" id="832587"/>
<dbReference type="Gramene" id="AT5G25160.1">
    <property type="protein sequence ID" value="AT5G25160.1"/>
    <property type="gene ID" value="AT5G25160"/>
</dbReference>
<dbReference type="KEGG" id="ath:AT5G25160"/>
<dbReference type="Araport" id="AT5G25160"/>
<dbReference type="TAIR" id="AT5G25160">
    <property type="gene designation" value="ZFP3"/>
</dbReference>
<dbReference type="eggNOG" id="ENOG502RXWM">
    <property type="taxonomic scope" value="Eukaryota"/>
</dbReference>
<dbReference type="HOGENOM" id="CLU_078088_0_0_1"/>
<dbReference type="InParanoid" id="Q39262"/>
<dbReference type="OMA" id="IHKPNSH"/>
<dbReference type="OrthoDB" id="1933825at2759"/>
<dbReference type="PhylomeDB" id="Q39262"/>
<dbReference type="PRO" id="PR:Q39262"/>
<dbReference type="Proteomes" id="UP000006548">
    <property type="component" value="Chromosome 5"/>
</dbReference>
<dbReference type="ExpressionAtlas" id="Q39262">
    <property type="expression patterns" value="baseline and differential"/>
</dbReference>
<dbReference type="GO" id="GO:0005634">
    <property type="term" value="C:nucleus"/>
    <property type="evidence" value="ECO:0000314"/>
    <property type="project" value="UniProtKB"/>
</dbReference>
<dbReference type="GO" id="GO:0003700">
    <property type="term" value="F:DNA-binding transcription factor activity"/>
    <property type="evidence" value="ECO:0000250"/>
    <property type="project" value="TAIR"/>
</dbReference>
<dbReference type="GO" id="GO:0000976">
    <property type="term" value="F:transcription cis-regulatory region binding"/>
    <property type="evidence" value="ECO:0000353"/>
    <property type="project" value="TAIR"/>
</dbReference>
<dbReference type="GO" id="GO:0008270">
    <property type="term" value="F:zinc ion binding"/>
    <property type="evidence" value="ECO:0007669"/>
    <property type="project" value="UniProtKB-KW"/>
</dbReference>
<dbReference type="GO" id="GO:0009738">
    <property type="term" value="P:abscisic acid-activated signaling pathway"/>
    <property type="evidence" value="ECO:0007669"/>
    <property type="project" value="UniProtKB-KW"/>
</dbReference>
<dbReference type="GO" id="GO:0009788">
    <property type="term" value="P:negative regulation of abscisic acid-activated signaling pathway"/>
    <property type="evidence" value="ECO:0000315"/>
    <property type="project" value="UniProtKB"/>
</dbReference>
<dbReference type="GO" id="GO:0006355">
    <property type="term" value="P:regulation of DNA-templated transcription"/>
    <property type="evidence" value="ECO:0000304"/>
    <property type="project" value="TAIR"/>
</dbReference>
<dbReference type="FunFam" id="3.30.160.60:FF:001366">
    <property type="entry name" value="Zinc finger protein 2"/>
    <property type="match status" value="1"/>
</dbReference>
<dbReference type="Gene3D" id="3.30.160.60">
    <property type="entry name" value="Classic Zinc Finger"/>
    <property type="match status" value="1"/>
</dbReference>
<dbReference type="InterPro" id="IPR044246">
    <property type="entry name" value="ZFP3-like"/>
</dbReference>
<dbReference type="InterPro" id="IPR036236">
    <property type="entry name" value="Znf_C2H2_sf"/>
</dbReference>
<dbReference type="InterPro" id="IPR013087">
    <property type="entry name" value="Znf_C2H2_type"/>
</dbReference>
<dbReference type="PANTHER" id="PTHR47287">
    <property type="entry name" value="C2H2 AND C2HC ZINC FINGERS SUPERFAMILY PROTEIN"/>
    <property type="match status" value="1"/>
</dbReference>
<dbReference type="PANTHER" id="PTHR47287:SF14">
    <property type="entry name" value="GENOME ASSEMBLY, CHROMOSOME: A02"/>
    <property type="match status" value="1"/>
</dbReference>
<dbReference type="SUPFAM" id="SSF57667">
    <property type="entry name" value="beta-beta-alpha zinc fingers"/>
    <property type="match status" value="1"/>
</dbReference>
<dbReference type="PROSITE" id="PS00028">
    <property type="entry name" value="ZINC_FINGER_C2H2_1"/>
    <property type="match status" value="1"/>
</dbReference>
<dbReference type="PROSITE" id="PS50157">
    <property type="entry name" value="ZINC_FINGER_C2H2_2"/>
    <property type="match status" value="1"/>
</dbReference>
<feature type="chain" id="PRO_0000047844" description="Zinc finger protein 3">
    <location>
        <begin position="1"/>
        <end position="235"/>
    </location>
</feature>
<feature type="zinc finger region" description="C2H2-type" evidence="2">
    <location>
        <begin position="61"/>
        <end position="83"/>
    </location>
</feature>
<feature type="region of interest" description="Disordered" evidence="3">
    <location>
        <begin position="186"/>
        <end position="206"/>
    </location>
</feature>
<feature type="compositionally biased region" description="Polar residues" evidence="3">
    <location>
        <begin position="186"/>
        <end position="198"/>
    </location>
</feature>
<organism>
    <name type="scientific">Arabidopsis thaliana</name>
    <name type="common">Mouse-ear cress</name>
    <dbReference type="NCBI Taxonomy" id="3702"/>
    <lineage>
        <taxon>Eukaryota</taxon>
        <taxon>Viridiplantae</taxon>
        <taxon>Streptophyta</taxon>
        <taxon>Embryophyta</taxon>
        <taxon>Tracheophyta</taxon>
        <taxon>Spermatophyta</taxon>
        <taxon>Magnoliopsida</taxon>
        <taxon>eudicotyledons</taxon>
        <taxon>Gunneridae</taxon>
        <taxon>Pentapetalae</taxon>
        <taxon>rosids</taxon>
        <taxon>malvids</taxon>
        <taxon>Brassicales</taxon>
        <taxon>Brassicaceae</taxon>
        <taxon>Camelineae</taxon>
        <taxon>Arabidopsis</taxon>
    </lineage>
</organism>
<reference key="1">
    <citation type="journal article" date="1995" name="Plant Mol. Biol.">
        <title>Characterization of a family of Arabidopsis zinc finger protein cDNAs.</title>
        <authorList>
            <person name="Tague B.W."/>
            <person name="Goodman H.M."/>
        </authorList>
    </citation>
    <scope>NUCLEOTIDE SEQUENCE [MRNA]</scope>
    <source>
        <strain>cv. Landsberg erecta</strain>
        <tissue>Root</tissue>
    </source>
</reference>
<reference key="2">
    <citation type="journal article" date="2000" name="Nature">
        <title>Sequence and analysis of chromosome 5 of the plant Arabidopsis thaliana.</title>
        <authorList>
            <person name="Tabata S."/>
            <person name="Kaneko T."/>
            <person name="Nakamura Y."/>
            <person name="Kotani H."/>
            <person name="Kato T."/>
            <person name="Asamizu E."/>
            <person name="Miyajima N."/>
            <person name="Sasamoto S."/>
            <person name="Kimura T."/>
            <person name="Hosouchi T."/>
            <person name="Kawashima K."/>
            <person name="Kohara M."/>
            <person name="Matsumoto M."/>
            <person name="Matsuno A."/>
            <person name="Muraki A."/>
            <person name="Nakayama S."/>
            <person name="Nakazaki N."/>
            <person name="Naruo K."/>
            <person name="Okumura S."/>
            <person name="Shinpo S."/>
            <person name="Takeuchi C."/>
            <person name="Wada T."/>
            <person name="Watanabe A."/>
            <person name="Yamada M."/>
            <person name="Yasuda M."/>
            <person name="Sato S."/>
            <person name="de la Bastide M."/>
            <person name="Huang E."/>
            <person name="Spiegel L."/>
            <person name="Gnoj L."/>
            <person name="O'Shaughnessy A."/>
            <person name="Preston R."/>
            <person name="Habermann K."/>
            <person name="Murray J."/>
            <person name="Johnson D."/>
            <person name="Rohlfing T."/>
            <person name="Nelson J."/>
            <person name="Stoneking T."/>
            <person name="Pepin K."/>
            <person name="Spieth J."/>
            <person name="Sekhon M."/>
            <person name="Armstrong J."/>
            <person name="Becker M."/>
            <person name="Belter E."/>
            <person name="Cordum H."/>
            <person name="Cordes M."/>
            <person name="Courtney L."/>
            <person name="Courtney W."/>
            <person name="Dante M."/>
            <person name="Du H."/>
            <person name="Edwards J."/>
            <person name="Fryman J."/>
            <person name="Haakensen B."/>
            <person name="Lamar E."/>
            <person name="Latreille P."/>
            <person name="Leonard S."/>
            <person name="Meyer R."/>
            <person name="Mulvaney E."/>
            <person name="Ozersky P."/>
            <person name="Riley A."/>
            <person name="Strowmatt C."/>
            <person name="Wagner-McPherson C."/>
            <person name="Wollam A."/>
            <person name="Yoakum M."/>
            <person name="Bell M."/>
            <person name="Dedhia N."/>
            <person name="Parnell L."/>
            <person name="Shah R."/>
            <person name="Rodriguez M."/>
            <person name="Hoon See L."/>
            <person name="Vil D."/>
            <person name="Baker J."/>
            <person name="Kirchoff K."/>
            <person name="Toth K."/>
            <person name="King L."/>
            <person name="Bahret A."/>
            <person name="Miller B."/>
            <person name="Marra M.A."/>
            <person name="Martienssen R."/>
            <person name="McCombie W.R."/>
            <person name="Wilson R.K."/>
            <person name="Murphy G."/>
            <person name="Bancroft I."/>
            <person name="Volckaert G."/>
            <person name="Wambutt R."/>
            <person name="Duesterhoeft A."/>
            <person name="Stiekema W."/>
            <person name="Pohl T."/>
            <person name="Entian K.-D."/>
            <person name="Terryn N."/>
            <person name="Hartley N."/>
            <person name="Bent E."/>
            <person name="Johnson S."/>
            <person name="Langham S.-A."/>
            <person name="McCullagh B."/>
            <person name="Robben J."/>
            <person name="Grymonprez B."/>
            <person name="Zimmermann W."/>
            <person name="Ramsperger U."/>
            <person name="Wedler H."/>
            <person name="Balke K."/>
            <person name="Wedler E."/>
            <person name="Peters S."/>
            <person name="van Staveren M."/>
            <person name="Dirkse W."/>
            <person name="Mooijman P."/>
            <person name="Klein Lankhorst R."/>
            <person name="Weitzenegger T."/>
            <person name="Bothe G."/>
            <person name="Rose M."/>
            <person name="Hauf J."/>
            <person name="Berneiser S."/>
            <person name="Hempel S."/>
            <person name="Feldpausch M."/>
            <person name="Lamberth S."/>
            <person name="Villarroel R."/>
            <person name="Gielen J."/>
            <person name="Ardiles W."/>
            <person name="Bents O."/>
            <person name="Lemcke K."/>
            <person name="Kolesov G."/>
            <person name="Mayer K.F.X."/>
            <person name="Rudd S."/>
            <person name="Schoof H."/>
            <person name="Schueller C."/>
            <person name="Zaccaria P."/>
            <person name="Mewes H.-W."/>
            <person name="Bevan M."/>
            <person name="Fransz P.F."/>
        </authorList>
    </citation>
    <scope>NUCLEOTIDE SEQUENCE [LARGE SCALE GENOMIC DNA]</scope>
    <source>
        <strain>cv. Columbia</strain>
    </source>
</reference>
<reference key="3">
    <citation type="journal article" date="2017" name="Plant J.">
        <title>Araport11: a complete reannotation of the Arabidopsis thaliana reference genome.</title>
        <authorList>
            <person name="Cheng C.Y."/>
            <person name="Krishnakumar V."/>
            <person name="Chan A.P."/>
            <person name="Thibaud-Nissen F."/>
            <person name="Schobel S."/>
            <person name="Town C.D."/>
        </authorList>
    </citation>
    <scope>GENOME REANNOTATION</scope>
    <source>
        <strain>cv. Columbia</strain>
    </source>
</reference>
<reference key="4">
    <citation type="journal article" date="2003" name="Science">
        <title>Empirical analysis of transcriptional activity in the Arabidopsis genome.</title>
        <authorList>
            <person name="Yamada K."/>
            <person name="Lim J."/>
            <person name="Dale J.M."/>
            <person name="Chen H."/>
            <person name="Shinn P."/>
            <person name="Palm C.J."/>
            <person name="Southwick A.M."/>
            <person name="Wu H.C."/>
            <person name="Kim C.J."/>
            <person name="Nguyen M."/>
            <person name="Pham P.K."/>
            <person name="Cheuk R.F."/>
            <person name="Karlin-Newmann G."/>
            <person name="Liu S.X."/>
            <person name="Lam B."/>
            <person name="Sakano H."/>
            <person name="Wu T."/>
            <person name="Yu G."/>
            <person name="Miranda M."/>
            <person name="Quach H.L."/>
            <person name="Tripp M."/>
            <person name="Chang C.H."/>
            <person name="Lee J.M."/>
            <person name="Toriumi M.J."/>
            <person name="Chan M.M."/>
            <person name="Tang C.C."/>
            <person name="Onodera C.S."/>
            <person name="Deng J.M."/>
            <person name="Akiyama K."/>
            <person name="Ansari Y."/>
            <person name="Arakawa T."/>
            <person name="Banh J."/>
            <person name="Banno F."/>
            <person name="Bowser L."/>
            <person name="Brooks S.Y."/>
            <person name="Carninci P."/>
            <person name="Chao Q."/>
            <person name="Choy N."/>
            <person name="Enju A."/>
            <person name="Goldsmith A.D."/>
            <person name="Gurjal M."/>
            <person name="Hansen N.F."/>
            <person name="Hayashizaki Y."/>
            <person name="Johnson-Hopson C."/>
            <person name="Hsuan V.W."/>
            <person name="Iida K."/>
            <person name="Karnes M."/>
            <person name="Khan S."/>
            <person name="Koesema E."/>
            <person name="Ishida J."/>
            <person name="Jiang P.X."/>
            <person name="Jones T."/>
            <person name="Kawai J."/>
            <person name="Kamiya A."/>
            <person name="Meyers C."/>
            <person name="Nakajima M."/>
            <person name="Narusaka M."/>
            <person name="Seki M."/>
            <person name="Sakurai T."/>
            <person name="Satou M."/>
            <person name="Tamse R."/>
            <person name="Vaysberg M."/>
            <person name="Wallender E.K."/>
            <person name="Wong C."/>
            <person name="Yamamura Y."/>
            <person name="Yuan S."/>
            <person name="Shinozaki K."/>
            <person name="Davis R.W."/>
            <person name="Theologis A."/>
            <person name="Ecker J.R."/>
        </authorList>
    </citation>
    <scope>NUCLEOTIDE SEQUENCE [LARGE SCALE MRNA]</scope>
    <source>
        <strain>cv. Columbia</strain>
    </source>
</reference>
<reference key="5">
    <citation type="journal article" date="2014" name="Plant Physiol.">
        <title>The Arabidopsis ZINC FINGER PROTEIN3 interferes with abscisic acid and light signaling in seed germination and plant development.</title>
        <authorList>
            <person name="Joseph M.P."/>
            <person name="Papdi C."/>
            <person name="Kozma-Bognar L."/>
            <person name="Nagy I."/>
            <person name="Lopez-Carbonell M."/>
            <person name="Rigo G."/>
            <person name="Koncz C."/>
            <person name="Szabados L."/>
        </authorList>
    </citation>
    <scope>FUNCTION</scope>
    <scope>SUBCELLULAR LOCATION</scope>
    <scope>TISSUE SPECIFICITY</scope>
    <scope>INDUCTION</scope>
    <scope>DISRUPTION PHENOTYPE</scope>
</reference>